<proteinExistence type="evidence at protein level"/>
<sequence length="257" mass="28575">MDRSAEFGRWKAQSLSKADLSRKGSVDEDAVEVVELLNSREEFFTTSSCAGRILLLDGSTEGSGVQKQHCCWLLVTHKPCARDDVMAALKGATSEAVLKFEPFILHVQCRTLQDAQTLHSVAIDSGFRNSGITVGKRGKTMLAVRGTHGLEVPLTHKGKLMVTEEYIEFLLTIANQKMEENKRRIGRFYNYLQHALKRETISNSHSKIKERNNPLCTHKNRRSQGKAQGPSTTEDNGRELEDGDGLEISAALFLGDD</sequence>
<protein>
    <recommendedName>
        <fullName>tRNA wybutosine-synthesizing protein 3 homolog</fullName>
        <shortName>tRNA-yW-synthesizing protein 3</shortName>
        <ecNumber>2.1.1.282</ecNumber>
    </recommendedName>
    <alternativeName>
        <fullName>tRNA(Phe) 7-((3-amino-3-carboxypropyl)-4-demethylwyosine(37)-N(4))-methyltransferase</fullName>
    </alternativeName>
</protein>
<feature type="chain" id="PRO_0000281843" description="tRNA wybutosine-synthesizing protein 3 homolog">
    <location>
        <begin position="1"/>
        <end position="257"/>
    </location>
</feature>
<feature type="region of interest" description="Disordered" evidence="2">
    <location>
        <begin position="202"/>
        <end position="244"/>
    </location>
</feature>
<feature type="compositionally biased region" description="Polar residues" evidence="2">
    <location>
        <begin position="225"/>
        <end position="234"/>
    </location>
</feature>
<feature type="modified residue" description="Phosphoserine" evidence="4">
    <location>
        <position position="25"/>
    </location>
</feature>
<comment type="function">
    <text evidence="1">Probable S-adenosyl-L-methionine-dependent methyltransferase that acts as a component of the wybutosine biosynthesis pathway. Wybutosine is a hyper modified guanosine with a tricyclic base found at the 3'-position adjacent to the anticodon of eukaryotic phenylalanine tRNA (By similarity).</text>
</comment>
<comment type="catalytic activity">
    <reaction>
        <text>4-demethyl-7-[(3S)-3-amino-3-carboxypropyl]wyosine(37) in tRNA(Phe) + S-adenosyl-L-methionine = 7-[(3S)-3-amino-3-carboxypropyl]wyosine(37) in tRNA(Phe) + S-adenosyl-L-homocysteine + H(+)</text>
        <dbReference type="Rhea" id="RHEA:36635"/>
        <dbReference type="Rhea" id="RHEA-COMP:10378"/>
        <dbReference type="Rhea" id="RHEA-COMP:10379"/>
        <dbReference type="ChEBI" id="CHEBI:15378"/>
        <dbReference type="ChEBI" id="CHEBI:57856"/>
        <dbReference type="ChEBI" id="CHEBI:59789"/>
        <dbReference type="ChEBI" id="CHEBI:73543"/>
        <dbReference type="ChEBI" id="CHEBI:73550"/>
        <dbReference type="EC" id="2.1.1.282"/>
    </reaction>
</comment>
<comment type="pathway">
    <text>tRNA modification; wybutosine-tRNA(Phe) biosynthesis.</text>
</comment>
<comment type="similarity">
    <text evidence="3">Belongs to the TYW3 family.</text>
</comment>
<comment type="sequence caution" evidence="3">
    <conflict type="erroneous initiation">
        <sequence resource="EMBL-CDS" id="BAC26913"/>
    </conflict>
</comment>
<gene>
    <name type="primary">Tyw3</name>
</gene>
<reference key="1">
    <citation type="journal article" date="2005" name="Science">
        <title>The transcriptional landscape of the mammalian genome.</title>
        <authorList>
            <person name="Carninci P."/>
            <person name="Kasukawa T."/>
            <person name="Katayama S."/>
            <person name="Gough J."/>
            <person name="Frith M.C."/>
            <person name="Maeda N."/>
            <person name="Oyama R."/>
            <person name="Ravasi T."/>
            <person name="Lenhard B."/>
            <person name="Wells C."/>
            <person name="Kodzius R."/>
            <person name="Shimokawa K."/>
            <person name="Bajic V.B."/>
            <person name="Brenner S.E."/>
            <person name="Batalov S."/>
            <person name="Forrest A.R."/>
            <person name="Zavolan M."/>
            <person name="Davis M.J."/>
            <person name="Wilming L.G."/>
            <person name="Aidinis V."/>
            <person name="Allen J.E."/>
            <person name="Ambesi-Impiombato A."/>
            <person name="Apweiler R."/>
            <person name="Aturaliya R.N."/>
            <person name="Bailey T.L."/>
            <person name="Bansal M."/>
            <person name="Baxter L."/>
            <person name="Beisel K.W."/>
            <person name="Bersano T."/>
            <person name="Bono H."/>
            <person name="Chalk A.M."/>
            <person name="Chiu K.P."/>
            <person name="Choudhary V."/>
            <person name="Christoffels A."/>
            <person name="Clutterbuck D.R."/>
            <person name="Crowe M.L."/>
            <person name="Dalla E."/>
            <person name="Dalrymple B.P."/>
            <person name="de Bono B."/>
            <person name="Della Gatta G."/>
            <person name="di Bernardo D."/>
            <person name="Down T."/>
            <person name="Engstrom P."/>
            <person name="Fagiolini M."/>
            <person name="Faulkner G."/>
            <person name="Fletcher C.F."/>
            <person name="Fukushima T."/>
            <person name="Furuno M."/>
            <person name="Futaki S."/>
            <person name="Gariboldi M."/>
            <person name="Georgii-Hemming P."/>
            <person name="Gingeras T.R."/>
            <person name="Gojobori T."/>
            <person name="Green R.E."/>
            <person name="Gustincich S."/>
            <person name="Harbers M."/>
            <person name="Hayashi Y."/>
            <person name="Hensch T.K."/>
            <person name="Hirokawa N."/>
            <person name="Hill D."/>
            <person name="Huminiecki L."/>
            <person name="Iacono M."/>
            <person name="Ikeo K."/>
            <person name="Iwama A."/>
            <person name="Ishikawa T."/>
            <person name="Jakt M."/>
            <person name="Kanapin A."/>
            <person name="Katoh M."/>
            <person name="Kawasawa Y."/>
            <person name="Kelso J."/>
            <person name="Kitamura H."/>
            <person name="Kitano H."/>
            <person name="Kollias G."/>
            <person name="Krishnan S.P."/>
            <person name="Kruger A."/>
            <person name="Kummerfeld S.K."/>
            <person name="Kurochkin I.V."/>
            <person name="Lareau L.F."/>
            <person name="Lazarevic D."/>
            <person name="Lipovich L."/>
            <person name="Liu J."/>
            <person name="Liuni S."/>
            <person name="McWilliam S."/>
            <person name="Madan Babu M."/>
            <person name="Madera M."/>
            <person name="Marchionni L."/>
            <person name="Matsuda H."/>
            <person name="Matsuzawa S."/>
            <person name="Miki H."/>
            <person name="Mignone F."/>
            <person name="Miyake S."/>
            <person name="Morris K."/>
            <person name="Mottagui-Tabar S."/>
            <person name="Mulder N."/>
            <person name="Nakano N."/>
            <person name="Nakauchi H."/>
            <person name="Ng P."/>
            <person name="Nilsson R."/>
            <person name="Nishiguchi S."/>
            <person name="Nishikawa S."/>
            <person name="Nori F."/>
            <person name="Ohara O."/>
            <person name="Okazaki Y."/>
            <person name="Orlando V."/>
            <person name="Pang K.C."/>
            <person name="Pavan W.J."/>
            <person name="Pavesi G."/>
            <person name="Pesole G."/>
            <person name="Petrovsky N."/>
            <person name="Piazza S."/>
            <person name="Reed J."/>
            <person name="Reid J.F."/>
            <person name="Ring B.Z."/>
            <person name="Ringwald M."/>
            <person name="Rost B."/>
            <person name="Ruan Y."/>
            <person name="Salzberg S.L."/>
            <person name="Sandelin A."/>
            <person name="Schneider C."/>
            <person name="Schoenbach C."/>
            <person name="Sekiguchi K."/>
            <person name="Semple C.A."/>
            <person name="Seno S."/>
            <person name="Sessa L."/>
            <person name="Sheng Y."/>
            <person name="Shibata Y."/>
            <person name="Shimada H."/>
            <person name="Shimada K."/>
            <person name="Silva D."/>
            <person name="Sinclair B."/>
            <person name="Sperling S."/>
            <person name="Stupka E."/>
            <person name="Sugiura K."/>
            <person name="Sultana R."/>
            <person name="Takenaka Y."/>
            <person name="Taki K."/>
            <person name="Tammoja K."/>
            <person name="Tan S.L."/>
            <person name="Tang S."/>
            <person name="Taylor M.S."/>
            <person name="Tegner J."/>
            <person name="Teichmann S.A."/>
            <person name="Ueda H.R."/>
            <person name="van Nimwegen E."/>
            <person name="Verardo R."/>
            <person name="Wei C.L."/>
            <person name="Yagi K."/>
            <person name="Yamanishi H."/>
            <person name="Zabarovsky E."/>
            <person name="Zhu S."/>
            <person name="Zimmer A."/>
            <person name="Hide W."/>
            <person name="Bult C."/>
            <person name="Grimmond S.M."/>
            <person name="Teasdale R.D."/>
            <person name="Liu E.T."/>
            <person name="Brusic V."/>
            <person name="Quackenbush J."/>
            <person name="Wahlestedt C."/>
            <person name="Mattick J.S."/>
            <person name="Hume D.A."/>
            <person name="Kai C."/>
            <person name="Sasaki D."/>
            <person name="Tomaru Y."/>
            <person name="Fukuda S."/>
            <person name="Kanamori-Katayama M."/>
            <person name="Suzuki M."/>
            <person name="Aoki J."/>
            <person name="Arakawa T."/>
            <person name="Iida J."/>
            <person name="Imamura K."/>
            <person name="Itoh M."/>
            <person name="Kato T."/>
            <person name="Kawaji H."/>
            <person name="Kawagashira N."/>
            <person name="Kawashima T."/>
            <person name="Kojima M."/>
            <person name="Kondo S."/>
            <person name="Konno H."/>
            <person name="Nakano K."/>
            <person name="Ninomiya N."/>
            <person name="Nishio T."/>
            <person name="Okada M."/>
            <person name="Plessy C."/>
            <person name="Shibata K."/>
            <person name="Shiraki T."/>
            <person name="Suzuki S."/>
            <person name="Tagami M."/>
            <person name="Waki K."/>
            <person name="Watahiki A."/>
            <person name="Okamura-Oho Y."/>
            <person name="Suzuki H."/>
            <person name="Kawai J."/>
            <person name="Hayashizaki Y."/>
        </authorList>
    </citation>
    <scope>NUCLEOTIDE SEQUENCE [LARGE SCALE MRNA]</scope>
    <source>
        <strain>C57BL/6J</strain>
        <tissue>Embryo</tissue>
    </source>
</reference>
<reference key="2">
    <citation type="journal article" date="2004" name="Genome Res.">
        <title>The status, quality, and expansion of the NIH full-length cDNA project: the Mammalian Gene Collection (MGC).</title>
        <authorList>
            <consortium name="The MGC Project Team"/>
        </authorList>
    </citation>
    <scope>NUCLEOTIDE SEQUENCE [LARGE SCALE MRNA]</scope>
    <source>
        <strain>C57BL/6J</strain>
        <tissue>Brain</tissue>
        <tissue>Eye</tissue>
        <tissue>Xiphoid cartilage</tissue>
    </source>
</reference>
<reference key="3">
    <citation type="journal article" date="2010" name="Cell">
        <title>A tissue-specific atlas of mouse protein phosphorylation and expression.</title>
        <authorList>
            <person name="Huttlin E.L."/>
            <person name="Jedrychowski M.P."/>
            <person name="Elias J.E."/>
            <person name="Goswami T."/>
            <person name="Rad R."/>
            <person name="Beausoleil S.A."/>
            <person name="Villen J."/>
            <person name="Haas W."/>
            <person name="Sowa M.E."/>
            <person name="Gygi S.P."/>
        </authorList>
    </citation>
    <scope>PHOSPHORYLATION [LARGE SCALE ANALYSIS] AT SER-25</scope>
    <scope>IDENTIFICATION BY MASS SPECTROMETRY [LARGE SCALE ANALYSIS]</scope>
    <source>
        <tissue>Brain</tissue>
        <tissue>Kidney</tissue>
    </source>
</reference>
<name>TYW3_MOUSE</name>
<organism>
    <name type="scientific">Mus musculus</name>
    <name type="common">Mouse</name>
    <dbReference type="NCBI Taxonomy" id="10090"/>
    <lineage>
        <taxon>Eukaryota</taxon>
        <taxon>Metazoa</taxon>
        <taxon>Chordata</taxon>
        <taxon>Craniata</taxon>
        <taxon>Vertebrata</taxon>
        <taxon>Euteleostomi</taxon>
        <taxon>Mammalia</taxon>
        <taxon>Eutheria</taxon>
        <taxon>Euarchontoglires</taxon>
        <taxon>Glires</taxon>
        <taxon>Rodentia</taxon>
        <taxon>Myomorpha</taxon>
        <taxon>Muroidea</taxon>
        <taxon>Muridae</taxon>
        <taxon>Murinae</taxon>
        <taxon>Mus</taxon>
        <taxon>Mus</taxon>
    </lineage>
</organism>
<dbReference type="EC" id="2.1.1.282"/>
<dbReference type="EMBL" id="AK030344">
    <property type="protein sequence ID" value="BAC26913.1"/>
    <property type="status" value="ALT_INIT"/>
    <property type="molecule type" value="mRNA"/>
</dbReference>
<dbReference type="EMBL" id="AK034820">
    <property type="protein sequence ID" value="BAC28842.1"/>
    <property type="molecule type" value="mRNA"/>
</dbReference>
<dbReference type="EMBL" id="BC086686">
    <property type="protein sequence ID" value="AAH86686.1"/>
    <property type="molecule type" value="mRNA"/>
</dbReference>
<dbReference type="EMBL" id="BC087879">
    <property type="protein sequence ID" value="AAH87879.1"/>
    <property type="molecule type" value="mRNA"/>
</dbReference>
<dbReference type="CCDS" id="CCDS38680.1"/>
<dbReference type="RefSeq" id="NP_766062.1">
    <property type="nucleotide sequence ID" value="NM_172474.6"/>
</dbReference>
<dbReference type="SMR" id="Q8BSA9"/>
<dbReference type="BioGRID" id="229093">
    <property type="interactions" value="10"/>
</dbReference>
<dbReference type="FunCoup" id="Q8BSA9">
    <property type="interactions" value="1026"/>
</dbReference>
<dbReference type="IntAct" id="Q8BSA9">
    <property type="interactions" value="9"/>
</dbReference>
<dbReference type="STRING" id="10090.ENSMUSP00000057828"/>
<dbReference type="iPTMnet" id="Q8BSA9"/>
<dbReference type="PhosphoSitePlus" id="Q8BSA9"/>
<dbReference type="PaxDb" id="10090-ENSMUSP00000057828"/>
<dbReference type="ProteomicsDB" id="297685"/>
<dbReference type="Pumba" id="Q8BSA9"/>
<dbReference type="Antibodypedia" id="33463">
    <property type="antibodies" value="52 antibodies from 19 providers"/>
</dbReference>
<dbReference type="Ensembl" id="ENSMUST00000052774.8">
    <property type="protein sequence ID" value="ENSMUSP00000057828.2"/>
    <property type="gene ID" value="ENSMUSG00000047583.10"/>
</dbReference>
<dbReference type="GeneID" id="209584"/>
<dbReference type="KEGG" id="mmu:209584"/>
<dbReference type="UCSC" id="uc008ruo.2">
    <property type="organism name" value="mouse"/>
</dbReference>
<dbReference type="AGR" id="MGI:2445040"/>
<dbReference type="CTD" id="127253"/>
<dbReference type="MGI" id="MGI:2445040">
    <property type="gene designation" value="Tyw3"/>
</dbReference>
<dbReference type="VEuPathDB" id="HostDB:ENSMUSG00000047583"/>
<dbReference type="eggNOG" id="KOG1228">
    <property type="taxonomic scope" value="Eukaryota"/>
</dbReference>
<dbReference type="GeneTree" id="ENSGT00940000153304"/>
<dbReference type="InParanoid" id="Q8BSA9"/>
<dbReference type="OMA" id="TWLYVSH"/>
<dbReference type="OrthoDB" id="263283at2759"/>
<dbReference type="PhylomeDB" id="Q8BSA9"/>
<dbReference type="TreeFam" id="TF329327"/>
<dbReference type="UniPathway" id="UPA00375"/>
<dbReference type="BioGRID-ORCS" id="209584">
    <property type="hits" value="3 hits in 76 CRISPR screens"/>
</dbReference>
<dbReference type="ChiTaRS" id="Tyw3">
    <property type="organism name" value="mouse"/>
</dbReference>
<dbReference type="PRO" id="PR:Q8BSA9"/>
<dbReference type="Proteomes" id="UP000000589">
    <property type="component" value="Chromosome 3"/>
</dbReference>
<dbReference type="RNAct" id="Q8BSA9">
    <property type="molecule type" value="protein"/>
</dbReference>
<dbReference type="Bgee" id="ENSMUSG00000047583">
    <property type="expression patterns" value="Expressed in blastoderm cell in morula and 183 other cell types or tissues"/>
</dbReference>
<dbReference type="ExpressionAtlas" id="Q8BSA9">
    <property type="expression patterns" value="baseline and differential"/>
</dbReference>
<dbReference type="GO" id="GO:0008168">
    <property type="term" value="F:methyltransferase activity"/>
    <property type="evidence" value="ECO:0007669"/>
    <property type="project" value="UniProtKB-KW"/>
</dbReference>
<dbReference type="GO" id="GO:0032259">
    <property type="term" value="P:methylation"/>
    <property type="evidence" value="ECO:0007669"/>
    <property type="project" value="UniProtKB-KW"/>
</dbReference>
<dbReference type="GO" id="GO:0008033">
    <property type="term" value="P:tRNA processing"/>
    <property type="evidence" value="ECO:0007669"/>
    <property type="project" value="UniProtKB-KW"/>
</dbReference>
<dbReference type="FunFam" id="3.30.1960.10:FF:000001">
    <property type="entry name" value="tRNA wybutosine-synthesizing protein 3 homolog"/>
    <property type="match status" value="1"/>
</dbReference>
<dbReference type="Gene3D" id="3.30.1960.10">
    <property type="entry name" value="tRNA wybutosine-synthesizing-like"/>
    <property type="match status" value="1"/>
</dbReference>
<dbReference type="InterPro" id="IPR003827">
    <property type="entry name" value="tRNA_yW-synthesising"/>
</dbReference>
<dbReference type="InterPro" id="IPR036602">
    <property type="entry name" value="tRNA_yW-synthesising-like_sf"/>
</dbReference>
<dbReference type="PANTHER" id="PTHR48418">
    <property type="entry name" value="TRNA WYBUTOSINE-SYNTHESIZING PROTEIN 3"/>
    <property type="match status" value="1"/>
</dbReference>
<dbReference type="PANTHER" id="PTHR48418:SF1">
    <property type="entry name" value="TRNA WYBUTOSINE-SYNTHESIZING PROTEIN 3"/>
    <property type="match status" value="1"/>
</dbReference>
<dbReference type="Pfam" id="PF02676">
    <property type="entry name" value="TYW3"/>
    <property type="match status" value="1"/>
</dbReference>
<dbReference type="SUPFAM" id="SSF111278">
    <property type="entry name" value="SSo0622-like"/>
    <property type="match status" value="1"/>
</dbReference>
<evidence type="ECO:0000250" key="1"/>
<evidence type="ECO:0000256" key="2">
    <source>
        <dbReference type="SAM" id="MobiDB-lite"/>
    </source>
</evidence>
<evidence type="ECO:0000305" key="3"/>
<evidence type="ECO:0007744" key="4">
    <source>
    </source>
</evidence>
<accession>Q8BSA9</accession>
<accession>Q8BSX2</accession>
<keyword id="KW-0489">Methyltransferase</keyword>
<keyword id="KW-0597">Phosphoprotein</keyword>
<keyword id="KW-1185">Reference proteome</keyword>
<keyword id="KW-0949">S-adenosyl-L-methionine</keyword>
<keyword id="KW-0808">Transferase</keyword>
<keyword id="KW-0819">tRNA processing</keyword>